<accession>A8FQ76</accession>
<comment type="similarity">
    <text evidence="1">Belongs to the bacterial ribosomal protein bL28 family.</text>
</comment>
<sequence length="78" mass="9089">MSRVCQVTGKKPMVGNNRSHAKNSTRRRFLPNLQNHRFWLEGEKRFVKLRISTKGMRIIDKKGIEVVVAELRARGEKV</sequence>
<proteinExistence type="inferred from homology"/>
<reference key="1">
    <citation type="submission" date="2007-08" db="EMBL/GenBank/DDBJ databases">
        <title>Complete sequence of Shewanella sediminis HAW-EB3.</title>
        <authorList>
            <consortium name="US DOE Joint Genome Institute"/>
            <person name="Copeland A."/>
            <person name="Lucas S."/>
            <person name="Lapidus A."/>
            <person name="Barry K."/>
            <person name="Glavina del Rio T."/>
            <person name="Dalin E."/>
            <person name="Tice H."/>
            <person name="Pitluck S."/>
            <person name="Chertkov O."/>
            <person name="Brettin T."/>
            <person name="Bruce D."/>
            <person name="Detter J.C."/>
            <person name="Han C."/>
            <person name="Schmutz J."/>
            <person name="Larimer F."/>
            <person name="Land M."/>
            <person name="Hauser L."/>
            <person name="Kyrpides N."/>
            <person name="Kim E."/>
            <person name="Zhao J.-S."/>
            <person name="Richardson P."/>
        </authorList>
    </citation>
    <scope>NUCLEOTIDE SEQUENCE [LARGE SCALE GENOMIC DNA]</scope>
    <source>
        <strain>HAW-EB3</strain>
    </source>
</reference>
<gene>
    <name evidence="1" type="primary">rpmB</name>
    <name type="ordered locus">Ssed_0386</name>
</gene>
<keyword id="KW-1185">Reference proteome</keyword>
<keyword id="KW-0687">Ribonucleoprotein</keyword>
<keyword id="KW-0689">Ribosomal protein</keyword>
<organism>
    <name type="scientific">Shewanella sediminis (strain HAW-EB3)</name>
    <dbReference type="NCBI Taxonomy" id="425104"/>
    <lineage>
        <taxon>Bacteria</taxon>
        <taxon>Pseudomonadati</taxon>
        <taxon>Pseudomonadota</taxon>
        <taxon>Gammaproteobacteria</taxon>
        <taxon>Alteromonadales</taxon>
        <taxon>Shewanellaceae</taxon>
        <taxon>Shewanella</taxon>
    </lineage>
</organism>
<name>RL28_SHESH</name>
<dbReference type="EMBL" id="CP000821">
    <property type="protein sequence ID" value="ABV34999.1"/>
    <property type="molecule type" value="Genomic_DNA"/>
</dbReference>
<dbReference type="RefSeq" id="WP_012140737.1">
    <property type="nucleotide sequence ID" value="NC_009831.1"/>
</dbReference>
<dbReference type="SMR" id="A8FQ76"/>
<dbReference type="STRING" id="425104.Ssed_0386"/>
<dbReference type="KEGG" id="sse:Ssed_0386"/>
<dbReference type="eggNOG" id="COG0227">
    <property type="taxonomic scope" value="Bacteria"/>
</dbReference>
<dbReference type="HOGENOM" id="CLU_064548_3_1_6"/>
<dbReference type="OrthoDB" id="9805609at2"/>
<dbReference type="Proteomes" id="UP000002015">
    <property type="component" value="Chromosome"/>
</dbReference>
<dbReference type="GO" id="GO:0022625">
    <property type="term" value="C:cytosolic large ribosomal subunit"/>
    <property type="evidence" value="ECO:0007669"/>
    <property type="project" value="TreeGrafter"/>
</dbReference>
<dbReference type="GO" id="GO:0003735">
    <property type="term" value="F:structural constituent of ribosome"/>
    <property type="evidence" value="ECO:0007669"/>
    <property type="project" value="InterPro"/>
</dbReference>
<dbReference type="GO" id="GO:0006412">
    <property type="term" value="P:translation"/>
    <property type="evidence" value="ECO:0007669"/>
    <property type="project" value="UniProtKB-UniRule"/>
</dbReference>
<dbReference type="FunFam" id="2.30.170.40:FF:000001">
    <property type="entry name" value="50S ribosomal protein L28"/>
    <property type="match status" value="1"/>
</dbReference>
<dbReference type="Gene3D" id="2.30.170.40">
    <property type="entry name" value="Ribosomal protein L28/L24"/>
    <property type="match status" value="1"/>
</dbReference>
<dbReference type="HAMAP" id="MF_00373">
    <property type="entry name" value="Ribosomal_bL28"/>
    <property type="match status" value="1"/>
</dbReference>
<dbReference type="InterPro" id="IPR026569">
    <property type="entry name" value="Ribosomal_bL28"/>
</dbReference>
<dbReference type="InterPro" id="IPR034704">
    <property type="entry name" value="Ribosomal_bL28/bL31-like_sf"/>
</dbReference>
<dbReference type="InterPro" id="IPR001383">
    <property type="entry name" value="Ribosomal_bL28_bact-type"/>
</dbReference>
<dbReference type="InterPro" id="IPR037147">
    <property type="entry name" value="Ribosomal_bL28_sf"/>
</dbReference>
<dbReference type="NCBIfam" id="TIGR00009">
    <property type="entry name" value="L28"/>
    <property type="match status" value="1"/>
</dbReference>
<dbReference type="PANTHER" id="PTHR13528">
    <property type="entry name" value="39S RIBOSOMAL PROTEIN L28, MITOCHONDRIAL"/>
    <property type="match status" value="1"/>
</dbReference>
<dbReference type="PANTHER" id="PTHR13528:SF2">
    <property type="entry name" value="LARGE RIBOSOMAL SUBUNIT PROTEIN BL28M"/>
    <property type="match status" value="1"/>
</dbReference>
<dbReference type="Pfam" id="PF00830">
    <property type="entry name" value="Ribosomal_L28"/>
    <property type="match status" value="1"/>
</dbReference>
<dbReference type="SUPFAM" id="SSF143800">
    <property type="entry name" value="L28p-like"/>
    <property type="match status" value="1"/>
</dbReference>
<evidence type="ECO:0000255" key="1">
    <source>
        <dbReference type="HAMAP-Rule" id="MF_00373"/>
    </source>
</evidence>
<evidence type="ECO:0000256" key="2">
    <source>
        <dbReference type="SAM" id="MobiDB-lite"/>
    </source>
</evidence>
<evidence type="ECO:0000305" key="3"/>
<feature type="chain" id="PRO_1000079865" description="Large ribosomal subunit protein bL28">
    <location>
        <begin position="1"/>
        <end position="78"/>
    </location>
</feature>
<feature type="region of interest" description="Disordered" evidence="2">
    <location>
        <begin position="1"/>
        <end position="23"/>
    </location>
</feature>
<protein>
    <recommendedName>
        <fullName evidence="1">Large ribosomal subunit protein bL28</fullName>
    </recommendedName>
    <alternativeName>
        <fullName evidence="3">50S ribosomal protein L28</fullName>
    </alternativeName>
</protein>